<accession>B6IPJ8</accession>
<comment type="function">
    <text evidence="1">Binds directly to 23S ribosomal RNA and is necessary for the in vitro assembly process of the 50S ribosomal subunit. It is not involved in the protein synthesizing functions of that subunit.</text>
</comment>
<comment type="similarity">
    <text evidence="1">Belongs to the bacterial ribosomal protein bL20 family.</text>
</comment>
<sequence>MARVKRGVTTHARHKKVLKLAKGYRGRSSKCYRIALERVEKALRYAYRDRRNRKRDFRGLWIQRINAGARLHGLTYSKFMHGLKRAGIEVDRKVLSDIAAREPESFKALVEQAQKALAA</sequence>
<feature type="chain" id="PRO_1000122361" description="Large ribosomal subunit protein bL20">
    <location>
        <begin position="1"/>
        <end position="119"/>
    </location>
</feature>
<dbReference type="EMBL" id="CP000613">
    <property type="protein sequence ID" value="ACI99700.1"/>
    <property type="molecule type" value="Genomic_DNA"/>
</dbReference>
<dbReference type="RefSeq" id="WP_012567485.1">
    <property type="nucleotide sequence ID" value="NC_011420.2"/>
</dbReference>
<dbReference type="SMR" id="B6IPJ8"/>
<dbReference type="STRING" id="414684.RC1_2313"/>
<dbReference type="KEGG" id="rce:RC1_2313"/>
<dbReference type="eggNOG" id="COG0292">
    <property type="taxonomic scope" value="Bacteria"/>
</dbReference>
<dbReference type="HOGENOM" id="CLU_123265_0_1_5"/>
<dbReference type="OrthoDB" id="9808966at2"/>
<dbReference type="Proteomes" id="UP000001591">
    <property type="component" value="Chromosome"/>
</dbReference>
<dbReference type="GO" id="GO:1990904">
    <property type="term" value="C:ribonucleoprotein complex"/>
    <property type="evidence" value="ECO:0007669"/>
    <property type="project" value="UniProtKB-KW"/>
</dbReference>
<dbReference type="GO" id="GO:0005840">
    <property type="term" value="C:ribosome"/>
    <property type="evidence" value="ECO:0007669"/>
    <property type="project" value="UniProtKB-KW"/>
</dbReference>
<dbReference type="GO" id="GO:0019843">
    <property type="term" value="F:rRNA binding"/>
    <property type="evidence" value="ECO:0007669"/>
    <property type="project" value="UniProtKB-UniRule"/>
</dbReference>
<dbReference type="GO" id="GO:0003735">
    <property type="term" value="F:structural constituent of ribosome"/>
    <property type="evidence" value="ECO:0007669"/>
    <property type="project" value="InterPro"/>
</dbReference>
<dbReference type="GO" id="GO:0000027">
    <property type="term" value="P:ribosomal large subunit assembly"/>
    <property type="evidence" value="ECO:0007669"/>
    <property type="project" value="UniProtKB-UniRule"/>
</dbReference>
<dbReference type="GO" id="GO:0006412">
    <property type="term" value="P:translation"/>
    <property type="evidence" value="ECO:0007669"/>
    <property type="project" value="InterPro"/>
</dbReference>
<dbReference type="CDD" id="cd07026">
    <property type="entry name" value="Ribosomal_L20"/>
    <property type="match status" value="1"/>
</dbReference>
<dbReference type="FunFam" id="1.10.1900.20:FF:000001">
    <property type="entry name" value="50S ribosomal protein L20"/>
    <property type="match status" value="1"/>
</dbReference>
<dbReference type="Gene3D" id="6.10.160.10">
    <property type="match status" value="1"/>
</dbReference>
<dbReference type="Gene3D" id="1.10.1900.20">
    <property type="entry name" value="Ribosomal protein L20"/>
    <property type="match status" value="1"/>
</dbReference>
<dbReference type="HAMAP" id="MF_00382">
    <property type="entry name" value="Ribosomal_bL20"/>
    <property type="match status" value="1"/>
</dbReference>
<dbReference type="InterPro" id="IPR005813">
    <property type="entry name" value="Ribosomal_bL20"/>
</dbReference>
<dbReference type="InterPro" id="IPR049946">
    <property type="entry name" value="RIBOSOMAL_L20_CS"/>
</dbReference>
<dbReference type="InterPro" id="IPR035566">
    <property type="entry name" value="Ribosomal_protein_bL20_C"/>
</dbReference>
<dbReference type="NCBIfam" id="TIGR01032">
    <property type="entry name" value="rplT_bact"/>
    <property type="match status" value="1"/>
</dbReference>
<dbReference type="PANTHER" id="PTHR10986">
    <property type="entry name" value="39S RIBOSOMAL PROTEIN L20"/>
    <property type="match status" value="1"/>
</dbReference>
<dbReference type="Pfam" id="PF00453">
    <property type="entry name" value="Ribosomal_L20"/>
    <property type="match status" value="1"/>
</dbReference>
<dbReference type="PRINTS" id="PR00062">
    <property type="entry name" value="RIBOSOMALL20"/>
</dbReference>
<dbReference type="SUPFAM" id="SSF74731">
    <property type="entry name" value="Ribosomal protein L20"/>
    <property type="match status" value="1"/>
</dbReference>
<dbReference type="PROSITE" id="PS00937">
    <property type="entry name" value="RIBOSOMAL_L20"/>
    <property type="match status" value="1"/>
</dbReference>
<gene>
    <name evidence="1" type="primary">rplT</name>
    <name type="ordered locus">RC1_2313</name>
</gene>
<keyword id="KW-1185">Reference proteome</keyword>
<keyword id="KW-0687">Ribonucleoprotein</keyword>
<keyword id="KW-0689">Ribosomal protein</keyword>
<keyword id="KW-0694">RNA-binding</keyword>
<keyword id="KW-0699">rRNA-binding</keyword>
<proteinExistence type="inferred from homology"/>
<name>RL20_RHOCS</name>
<protein>
    <recommendedName>
        <fullName evidence="1">Large ribosomal subunit protein bL20</fullName>
    </recommendedName>
    <alternativeName>
        <fullName evidence="2">50S ribosomal protein L20</fullName>
    </alternativeName>
</protein>
<evidence type="ECO:0000255" key="1">
    <source>
        <dbReference type="HAMAP-Rule" id="MF_00382"/>
    </source>
</evidence>
<evidence type="ECO:0000305" key="2"/>
<organism>
    <name type="scientific">Rhodospirillum centenum (strain ATCC 51521 / SW)</name>
    <dbReference type="NCBI Taxonomy" id="414684"/>
    <lineage>
        <taxon>Bacteria</taxon>
        <taxon>Pseudomonadati</taxon>
        <taxon>Pseudomonadota</taxon>
        <taxon>Alphaproteobacteria</taxon>
        <taxon>Rhodospirillales</taxon>
        <taxon>Rhodospirillaceae</taxon>
        <taxon>Rhodospirillum</taxon>
    </lineage>
</organism>
<reference key="1">
    <citation type="submission" date="2007-03" db="EMBL/GenBank/DDBJ databases">
        <title>Genome sequence of Rhodospirillum centenum.</title>
        <authorList>
            <person name="Touchman J.W."/>
            <person name="Bauer C."/>
            <person name="Blankenship R.E."/>
        </authorList>
    </citation>
    <scope>NUCLEOTIDE SEQUENCE [LARGE SCALE GENOMIC DNA]</scope>
    <source>
        <strain>ATCC 51521 / SW</strain>
    </source>
</reference>